<name>MNMG_RHIEC</name>
<protein>
    <recommendedName>
        <fullName evidence="1">tRNA uridine 5-carboxymethylaminomethyl modification enzyme MnmG</fullName>
    </recommendedName>
    <alternativeName>
        <fullName evidence="1">Glucose-inhibited division protein A</fullName>
    </alternativeName>
</protein>
<comment type="function">
    <text evidence="1">NAD-binding protein involved in the addition of a carboxymethylaminomethyl (cmnm) group at the wobble position (U34) of certain tRNAs, forming tRNA-cmnm(5)s(2)U34.</text>
</comment>
<comment type="cofactor">
    <cofactor evidence="1">
        <name>FAD</name>
        <dbReference type="ChEBI" id="CHEBI:57692"/>
    </cofactor>
</comment>
<comment type="subunit">
    <text evidence="1">Homodimer. Heterotetramer of two MnmE and two MnmG subunits.</text>
</comment>
<comment type="subcellular location">
    <subcellularLocation>
        <location evidence="1">Cytoplasm</location>
    </subcellularLocation>
</comment>
<comment type="similarity">
    <text evidence="1">Belongs to the MnmG family.</text>
</comment>
<evidence type="ECO:0000255" key="1">
    <source>
        <dbReference type="HAMAP-Rule" id="MF_00129"/>
    </source>
</evidence>
<feature type="chain" id="PRO_0000345321" description="tRNA uridine 5-carboxymethylaminomethyl modification enzyme MnmG">
    <location>
        <begin position="1"/>
        <end position="632"/>
    </location>
</feature>
<feature type="binding site" evidence="1">
    <location>
        <begin position="12"/>
        <end position="17"/>
    </location>
    <ligand>
        <name>FAD</name>
        <dbReference type="ChEBI" id="CHEBI:57692"/>
    </ligand>
</feature>
<feature type="binding site" evidence="1">
    <location>
        <begin position="271"/>
        <end position="285"/>
    </location>
    <ligand>
        <name>NAD(+)</name>
        <dbReference type="ChEBI" id="CHEBI:57540"/>
    </ligand>
</feature>
<organism>
    <name type="scientific">Rhizobium etli (strain ATCC 51251 / DSM 11541 / JCM 21823 / NBRC 15573 / CFN 42)</name>
    <dbReference type="NCBI Taxonomy" id="347834"/>
    <lineage>
        <taxon>Bacteria</taxon>
        <taxon>Pseudomonadati</taxon>
        <taxon>Pseudomonadota</taxon>
        <taxon>Alphaproteobacteria</taxon>
        <taxon>Hyphomicrobiales</taxon>
        <taxon>Rhizobiaceae</taxon>
        <taxon>Rhizobium/Agrobacterium group</taxon>
        <taxon>Rhizobium</taxon>
    </lineage>
</organism>
<dbReference type="EMBL" id="CP000133">
    <property type="protein sequence ID" value="ABC92865.1"/>
    <property type="molecule type" value="Genomic_DNA"/>
</dbReference>
<dbReference type="RefSeq" id="WP_011427302.1">
    <property type="nucleotide sequence ID" value="NC_007761.1"/>
</dbReference>
<dbReference type="SMR" id="Q2K2S1"/>
<dbReference type="KEGG" id="ret:RHE_CH04122"/>
<dbReference type="eggNOG" id="COG0445">
    <property type="taxonomic scope" value="Bacteria"/>
</dbReference>
<dbReference type="HOGENOM" id="CLU_007831_2_2_5"/>
<dbReference type="OrthoDB" id="9815560at2"/>
<dbReference type="Proteomes" id="UP000001936">
    <property type="component" value="Chromosome"/>
</dbReference>
<dbReference type="GO" id="GO:0005829">
    <property type="term" value="C:cytosol"/>
    <property type="evidence" value="ECO:0007669"/>
    <property type="project" value="TreeGrafter"/>
</dbReference>
<dbReference type="GO" id="GO:0050660">
    <property type="term" value="F:flavin adenine dinucleotide binding"/>
    <property type="evidence" value="ECO:0007669"/>
    <property type="project" value="UniProtKB-UniRule"/>
</dbReference>
<dbReference type="GO" id="GO:0030488">
    <property type="term" value="P:tRNA methylation"/>
    <property type="evidence" value="ECO:0007669"/>
    <property type="project" value="TreeGrafter"/>
</dbReference>
<dbReference type="GO" id="GO:0002098">
    <property type="term" value="P:tRNA wobble uridine modification"/>
    <property type="evidence" value="ECO:0007669"/>
    <property type="project" value="InterPro"/>
</dbReference>
<dbReference type="FunFam" id="3.50.50.60:FF:000082">
    <property type="entry name" value="protein MTO1 homolog, mitochondrial isoform X1"/>
    <property type="match status" value="1"/>
</dbReference>
<dbReference type="FunFam" id="1.10.150.570:FF:000001">
    <property type="entry name" value="tRNA uridine 5-carboxymethylaminomethyl modification enzyme MnmG"/>
    <property type="match status" value="1"/>
</dbReference>
<dbReference type="FunFam" id="3.50.50.60:FF:000002">
    <property type="entry name" value="tRNA uridine 5-carboxymethylaminomethyl modification enzyme MnmG"/>
    <property type="match status" value="1"/>
</dbReference>
<dbReference type="Gene3D" id="3.50.50.60">
    <property type="entry name" value="FAD/NAD(P)-binding domain"/>
    <property type="match status" value="2"/>
</dbReference>
<dbReference type="Gene3D" id="1.10.150.570">
    <property type="entry name" value="GidA associated domain, C-terminal subdomain"/>
    <property type="match status" value="1"/>
</dbReference>
<dbReference type="Gene3D" id="1.10.10.1800">
    <property type="entry name" value="tRNA uridine 5-carboxymethylaminomethyl modification enzyme MnmG/GidA"/>
    <property type="match status" value="1"/>
</dbReference>
<dbReference type="HAMAP" id="MF_00129">
    <property type="entry name" value="MnmG_GidA"/>
    <property type="match status" value="1"/>
</dbReference>
<dbReference type="InterPro" id="IPR036188">
    <property type="entry name" value="FAD/NAD-bd_sf"/>
</dbReference>
<dbReference type="InterPro" id="IPR049312">
    <property type="entry name" value="GIDA_C_N"/>
</dbReference>
<dbReference type="InterPro" id="IPR004416">
    <property type="entry name" value="MnmG"/>
</dbReference>
<dbReference type="InterPro" id="IPR002218">
    <property type="entry name" value="MnmG-rel"/>
</dbReference>
<dbReference type="InterPro" id="IPR020595">
    <property type="entry name" value="MnmG-rel_CS"/>
</dbReference>
<dbReference type="InterPro" id="IPR026904">
    <property type="entry name" value="MnmG_C"/>
</dbReference>
<dbReference type="InterPro" id="IPR047001">
    <property type="entry name" value="MnmG_C_subdom"/>
</dbReference>
<dbReference type="InterPro" id="IPR044920">
    <property type="entry name" value="MnmG_C_subdom_sf"/>
</dbReference>
<dbReference type="InterPro" id="IPR040131">
    <property type="entry name" value="MnmG_N"/>
</dbReference>
<dbReference type="NCBIfam" id="TIGR00136">
    <property type="entry name" value="mnmG_gidA"/>
    <property type="match status" value="1"/>
</dbReference>
<dbReference type="PANTHER" id="PTHR11806">
    <property type="entry name" value="GLUCOSE INHIBITED DIVISION PROTEIN A"/>
    <property type="match status" value="1"/>
</dbReference>
<dbReference type="PANTHER" id="PTHR11806:SF0">
    <property type="entry name" value="PROTEIN MTO1 HOMOLOG, MITOCHONDRIAL"/>
    <property type="match status" value="1"/>
</dbReference>
<dbReference type="Pfam" id="PF01134">
    <property type="entry name" value="GIDA"/>
    <property type="match status" value="1"/>
</dbReference>
<dbReference type="Pfam" id="PF21680">
    <property type="entry name" value="GIDA_C_1st"/>
    <property type="match status" value="1"/>
</dbReference>
<dbReference type="Pfam" id="PF13932">
    <property type="entry name" value="SAM_GIDA_C"/>
    <property type="match status" value="1"/>
</dbReference>
<dbReference type="SMART" id="SM01228">
    <property type="entry name" value="GIDA_assoc_3"/>
    <property type="match status" value="1"/>
</dbReference>
<dbReference type="SUPFAM" id="SSF51905">
    <property type="entry name" value="FAD/NAD(P)-binding domain"/>
    <property type="match status" value="1"/>
</dbReference>
<dbReference type="PROSITE" id="PS01280">
    <property type="entry name" value="GIDA_1"/>
    <property type="match status" value="1"/>
</dbReference>
<dbReference type="PROSITE" id="PS01281">
    <property type="entry name" value="GIDA_2"/>
    <property type="match status" value="1"/>
</dbReference>
<keyword id="KW-0963">Cytoplasm</keyword>
<keyword id="KW-0274">FAD</keyword>
<keyword id="KW-0285">Flavoprotein</keyword>
<keyword id="KW-0520">NAD</keyword>
<keyword id="KW-1185">Reference proteome</keyword>
<keyword id="KW-0819">tRNA processing</keyword>
<sequence length="632" mass="68329">MTNSGYNVIVIGGGHAGTEAASAAARLGAKTALVTHRRDTIGVMSCNPAIGGLGKGHLVREIDAMDGLMGRVADVAGIQFRMLNRKKGAAVRGPRTQADRKLYRLAMLAAIEATPGLDIIEGDAFDLDVLDGRVAGVIMKDGRRLQAPAVVLTTGTFLRGLIHIGSEKTPAGRVGEAPSIGLSATLARLGLRLGRLKTGTPARLDGKTIDWQSVGRQGADEELVPFSFMTDSITTRQVECGVTRTTEATHRIIVDNIKHSAMYSGQIEGVGPRYCPSIEDKLVKFGERDGHQVFLEPEGLDDDTVYPNGISTSLPAEIQAAFIKTIPGLESARILQPGYAIEYDHVDPRELTPSLEVKRLRGLFLAGQINGTTGYEEAAAQGLAAGLNAALLSSDSEPFHFSRTSSYIGVMIDDLTSRGVTEPYRMFTSRAEYRLTLRADNADMRLTPLAMALGCVGAERAERFTAYQAEIDAGRAQLMALTVTPNEARRAGLNINLDGQRRSAYDFLSYPTYDFAALRKVWPEELGRLRPKVAEALEIEAGYSVYLDRQAAAIADQQRDEERRIPADFNYDALSGLSNELKAKLSAARPFNVAQAAIVEGMTPAAVALLLVHLRRQQGFERQSADTRSESL</sequence>
<accession>Q2K2S1</accession>
<reference key="1">
    <citation type="journal article" date="2006" name="Proc. Natl. Acad. Sci. U.S.A.">
        <title>The partitioned Rhizobium etli genome: genetic and metabolic redundancy in seven interacting replicons.</title>
        <authorList>
            <person name="Gonzalez V."/>
            <person name="Santamaria R.I."/>
            <person name="Bustos P."/>
            <person name="Hernandez-Gonzalez I."/>
            <person name="Medrano-Soto A."/>
            <person name="Moreno-Hagelsieb G."/>
            <person name="Janga S.C."/>
            <person name="Ramirez M.A."/>
            <person name="Jimenez-Jacinto V."/>
            <person name="Collado-Vides J."/>
            <person name="Davila G."/>
        </authorList>
    </citation>
    <scope>NUCLEOTIDE SEQUENCE [LARGE SCALE GENOMIC DNA]</scope>
    <source>
        <strain>ATCC 51251 / DSM 11541 / JCM 21823 / NBRC 15573 / CFN 42</strain>
    </source>
</reference>
<gene>
    <name evidence="1" type="primary">mnmG</name>
    <name evidence="1" type="synonym">gidA</name>
    <name type="ordered locus">RHE_CH04122</name>
</gene>
<proteinExistence type="inferred from homology"/>